<evidence type="ECO:0000250" key="1">
    <source>
        <dbReference type="UniProtKB" id="P49804"/>
    </source>
</evidence>
<evidence type="ECO:0000255" key="2">
    <source>
        <dbReference type="PROSITE-ProRule" id="PRU00171"/>
    </source>
</evidence>
<proteinExistence type="evidence at transcript level"/>
<sequence>MKTRLGCLSNKSDSCSDFSEFLPPAQERTTRCLKLSNDEVTRWADSFDILLSNKYGLAAFRTFLKTEFSDENIEFWLACEDYKKIKSPAKMMSKANKIYKEFIDVHAPREVNIDHRTREETKNRLLEPTPHSLNEVQAKVYSLMEKDSYPRFIRSKIYQDLLNRTQIYCQRKSV</sequence>
<dbReference type="EMBL" id="BC076365">
    <property type="protein sequence ID" value="AAH76365.1"/>
    <property type="molecule type" value="mRNA"/>
</dbReference>
<dbReference type="RefSeq" id="NP_001002531.1">
    <property type="nucleotide sequence ID" value="NM_001002531.1"/>
</dbReference>
<dbReference type="SMR" id="Q6DGI0"/>
<dbReference type="FunCoup" id="Q6DGI0">
    <property type="interactions" value="53"/>
</dbReference>
<dbReference type="STRING" id="7955.ENSDARP00000093238"/>
<dbReference type="PaxDb" id="7955-ENSDARP00000093238"/>
<dbReference type="GeneID" id="436804"/>
<dbReference type="KEGG" id="dre:436804"/>
<dbReference type="AGR" id="ZFIN:ZDB-GENE-040718-264"/>
<dbReference type="CTD" id="85397"/>
<dbReference type="ZFIN" id="ZDB-GENE-040718-264">
    <property type="gene designation" value="rgs8"/>
</dbReference>
<dbReference type="eggNOG" id="KOG3589">
    <property type="taxonomic scope" value="Eukaryota"/>
</dbReference>
<dbReference type="InParanoid" id="Q6DGI0"/>
<dbReference type="OrthoDB" id="196547at2759"/>
<dbReference type="PhylomeDB" id="Q6DGI0"/>
<dbReference type="Reactome" id="R-DRE-416476">
    <property type="pathway name" value="G alpha (q) signalling events"/>
</dbReference>
<dbReference type="Reactome" id="R-DRE-418594">
    <property type="pathway name" value="G alpha (i) signalling events"/>
</dbReference>
<dbReference type="PRO" id="PR:Q6DGI0"/>
<dbReference type="Proteomes" id="UP000000437">
    <property type="component" value="Alternate scaffold 6"/>
</dbReference>
<dbReference type="Proteomes" id="UP000000437">
    <property type="component" value="Chromosome 6"/>
</dbReference>
<dbReference type="GO" id="GO:0009898">
    <property type="term" value="C:cytoplasmic side of plasma membrane"/>
    <property type="evidence" value="ECO:0000250"/>
    <property type="project" value="UniProtKB"/>
</dbReference>
<dbReference type="GO" id="GO:0030425">
    <property type="term" value="C:dendrite"/>
    <property type="evidence" value="ECO:0000250"/>
    <property type="project" value="UniProtKB"/>
</dbReference>
<dbReference type="GO" id="GO:0032809">
    <property type="term" value="C:neuronal cell body membrane"/>
    <property type="evidence" value="ECO:0000250"/>
    <property type="project" value="UniProtKB"/>
</dbReference>
<dbReference type="GO" id="GO:0005634">
    <property type="term" value="C:nucleus"/>
    <property type="evidence" value="ECO:0000250"/>
    <property type="project" value="UniProtKB"/>
</dbReference>
<dbReference type="GO" id="GO:0043204">
    <property type="term" value="C:perikaryon"/>
    <property type="evidence" value="ECO:0007669"/>
    <property type="project" value="UniProtKB-SubCell"/>
</dbReference>
<dbReference type="GO" id="GO:0045202">
    <property type="term" value="C:synapse"/>
    <property type="evidence" value="ECO:0007669"/>
    <property type="project" value="GOC"/>
</dbReference>
<dbReference type="GO" id="GO:0005096">
    <property type="term" value="F:GTPase activator activity"/>
    <property type="evidence" value="ECO:0000250"/>
    <property type="project" value="UniProtKB"/>
</dbReference>
<dbReference type="GO" id="GO:0007213">
    <property type="term" value="P:G protein-coupled acetylcholine receptor signaling pathway"/>
    <property type="evidence" value="ECO:0000250"/>
    <property type="project" value="UniProtKB"/>
</dbReference>
<dbReference type="GO" id="GO:0009968">
    <property type="term" value="P:negative regulation of signal transduction"/>
    <property type="evidence" value="ECO:0007669"/>
    <property type="project" value="UniProtKB-KW"/>
</dbReference>
<dbReference type="GO" id="GO:0043547">
    <property type="term" value="P:positive regulation of GTPase activity"/>
    <property type="evidence" value="ECO:0000250"/>
    <property type="project" value="UniProtKB"/>
</dbReference>
<dbReference type="GO" id="GO:0060159">
    <property type="term" value="P:regulation of dopamine receptor signaling pathway"/>
    <property type="evidence" value="ECO:0000250"/>
    <property type="project" value="UniProtKB"/>
</dbReference>
<dbReference type="FunFam" id="1.10.167.10:FF:000001">
    <property type="entry name" value="Putative regulator of g-protein signaling 12"/>
    <property type="match status" value="1"/>
</dbReference>
<dbReference type="Gene3D" id="1.10.167.10">
    <property type="entry name" value="Regulator of G-protein Signalling 4, domain 2"/>
    <property type="match status" value="1"/>
</dbReference>
<dbReference type="InterPro" id="IPR016137">
    <property type="entry name" value="RGS"/>
</dbReference>
<dbReference type="InterPro" id="IPR036305">
    <property type="entry name" value="RGS_sf"/>
</dbReference>
<dbReference type="InterPro" id="IPR044926">
    <property type="entry name" value="RGS_subdomain_2"/>
</dbReference>
<dbReference type="PANTHER" id="PTHR10845">
    <property type="entry name" value="REGULATOR OF G PROTEIN SIGNALING"/>
    <property type="match status" value="1"/>
</dbReference>
<dbReference type="PANTHER" id="PTHR10845:SF147">
    <property type="entry name" value="REGULATOR OF G-PROTEIN SIGNALING 8"/>
    <property type="match status" value="1"/>
</dbReference>
<dbReference type="Pfam" id="PF00615">
    <property type="entry name" value="RGS"/>
    <property type="match status" value="1"/>
</dbReference>
<dbReference type="PRINTS" id="PR01301">
    <property type="entry name" value="RGSPROTEIN"/>
</dbReference>
<dbReference type="SMART" id="SM00315">
    <property type="entry name" value="RGS"/>
    <property type="match status" value="1"/>
</dbReference>
<dbReference type="SUPFAM" id="SSF48097">
    <property type="entry name" value="Regulator of G-protein signaling, RGS"/>
    <property type="match status" value="1"/>
</dbReference>
<dbReference type="PROSITE" id="PS50132">
    <property type="entry name" value="RGS"/>
    <property type="match status" value="1"/>
</dbReference>
<reference key="1">
    <citation type="submission" date="2004-07" db="EMBL/GenBank/DDBJ databases">
        <authorList>
            <consortium name="NIH - Zebrafish Gene Collection (ZGC) project"/>
        </authorList>
    </citation>
    <scope>NUCLEOTIDE SEQUENCE [LARGE SCALE MRNA]</scope>
    <source>
        <tissue>Brain</tissue>
    </source>
</reference>
<accession>Q6DGI0</accession>
<feature type="chain" id="PRO_0000364204" description="Regulator of G-protein signaling 8">
    <location>
        <begin position="1"/>
        <end position="174"/>
    </location>
</feature>
<feature type="domain" description="RGS" evidence="2">
    <location>
        <begin position="46"/>
        <end position="162"/>
    </location>
</feature>
<protein>
    <recommendedName>
        <fullName>Regulator of G-protein signaling 8</fullName>
        <shortName>RGS8</shortName>
    </recommendedName>
</protein>
<comment type="function">
    <text evidence="1">Regulates G protein-coupled receptor signaling cascades, including signaling via muscarinic acetylcholine receptors and dopamine receptors. Inhibits signal transduction by increasing the GTPase activity of G protein alpha subunits, thereby driving them into their inactive GDP-bound form. Modulates the activity of potassium channels that are activated in response to G protein-coupled receptor signaling.</text>
</comment>
<comment type="subcellular location">
    <subcellularLocation>
        <location evidence="1">Cell membrane</location>
        <topology evidence="1">Peripheral membrane protein</topology>
        <orientation evidence="1">Cytoplasmic side</orientation>
    </subcellularLocation>
    <subcellularLocation>
        <location evidence="1">Membrane</location>
        <topology evidence="1">Peripheral membrane protein</topology>
        <orientation evidence="1">Cytoplasmic side</orientation>
    </subcellularLocation>
    <subcellularLocation>
        <location evidence="1">Perikaryon</location>
    </subcellularLocation>
    <subcellularLocation>
        <location evidence="1">Cell projection</location>
        <location evidence="1">Dendrite</location>
    </subcellularLocation>
    <subcellularLocation>
        <location evidence="1">Nucleus</location>
    </subcellularLocation>
    <text evidence="1">Detected in Purkinje cell soma and dendrites. Associated with Purkinje cell membranes. Not detected in Purkinje cell nuclei. Detected in the nucleus after heterologous expression. Recruited to the cell membrane in the presence of GNAO1.</text>
</comment>
<keyword id="KW-1003">Cell membrane</keyword>
<keyword id="KW-0966">Cell projection</keyword>
<keyword id="KW-0343">GTPase activation</keyword>
<keyword id="KW-0472">Membrane</keyword>
<keyword id="KW-0539">Nucleus</keyword>
<keyword id="KW-1185">Reference proteome</keyword>
<keyword id="KW-0734">Signal transduction inhibitor</keyword>
<gene>
    <name type="primary">rgs8</name>
    <name type="ORF">zgc:92913</name>
</gene>
<organism>
    <name type="scientific">Danio rerio</name>
    <name type="common">Zebrafish</name>
    <name type="synonym">Brachydanio rerio</name>
    <dbReference type="NCBI Taxonomy" id="7955"/>
    <lineage>
        <taxon>Eukaryota</taxon>
        <taxon>Metazoa</taxon>
        <taxon>Chordata</taxon>
        <taxon>Craniata</taxon>
        <taxon>Vertebrata</taxon>
        <taxon>Euteleostomi</taxon>
        <taxon>Actinopterygii</taxon>
        <taxon>Neopterygii</taxon>
        <taxon>Teleostei</taxon>
        <taxon>Ostariophysi</taxon>
        <taxon>Cypriniformes</taxon>
        <taxon>Danionidae</taxon>
        <taxon>Danioninae</taxon>
        <taxon>Danio</taxon>
    </lineage>
</organism>
<name>RGS8_DANRE</name>